<dbReference type="EMBL" id="AE014184">
    <property type="protein sequence ID" value="AAO44107.1"/>
    <property type="molecule type" value="Genomic_DNA"/>
</dbReference>
<dbReference type="RefSeq" id="WP_011095983.1">
    <property type="nucleotide sequence ID" value="NC_004572.3"/>
</dbReference>
<dbReference type="SMR" id="P67378"/>
<dbReference type="STRING" id="203267.TWT_010"/>
<dbReference type="GeneID" id="67387790"/>
<dbReference type="KEGG" id="twh:TWT_010"/>
<dbReference type="HOGENOM" id="CLU_149126_1_0_11"/>
<dbReference type="OrthoDB" id="5189646at2"/>
<dbReference type="Proteomes" id="UP000002200">
    <property type="component" value="Chromosome"/>
</dbReference>
<dbReference type="GO" id="GO:0005886">
    <property type="term" value="C:plasma membrane"/>
    <property type="evidence" value="ECO:0007669"/>
    <property type="project" value="UniProtKB-SubCell"/>
</dbReference>
<dbReference type="GO" id="GO:0051301">
    <property type="term" value="P:cell division"/>
    <property type="evidence" value="ECO:0007669"/>
    <property type="project" value="UniProtKB-UniRule"/>
</dbReference>
<dbReference type="HAMAP" id="MF_00631">
    <property type="entry name" value="CrgA"/>
    <property type="match status" value="1"/>
</dbReference>
<dbReference type="InterPro" id="IPR009619">
    <property type="entry name" value="CrgA"/>
</dbReference>
<dbReference type="NCBIfam" id="NF002596">
    <property type="entry name" value="PRK02251.2-2"/>
    <property type="match status" value="1"/>
</dbReference>
<dbReference type="Pfam" id="PF06781">
    <property type="entry name" value="CrgA"/>
    <property type="match status" value="1"/>
</dbReference>
<feature type="chain" id="PRO_0000216818" description="Cell division protein CrgA">
    <location>
        <begin position="1"/>
        <end position="69"/>
    </location>
</feature>
<feature type="transmembrane region" description="Helical" evidence="1">
    <location>
        <begin position="14"/>
        <end position="34"/>
    </location>
</feature>
<feature type="transmembrane region" description="Helical" evidence="1">
    <location>
        <begin position="45"/>
        <end position="65"/>
    </location>
</feature>
<evidence type="ECO:0000255" key="1">
    <source>
        <dbReference type="HAMAP-Rule" id="MF_00631"/>
    </source>
</evidence>
<keyword id="KW-0131">Cell cycle</keyword>
<keyword id="KW-0132">Cell division</keyword>
<keyword id="KW-1003">Cell membrane</keyword>
<keyword id="KW-0472">Membrane</keyword>
<keyword id="KW-1185">Reference proteome</keyword>
<keyword id="KW-0812">Transmembrane</keyword>
<keyword id="KW-1133">Transmembrane helix</keyword>
<proteinExistence type="inferred from homology"/>
<reference key="1">
    <citation type="journal article" date="2003" name="Genome Res.">
        <title>Tropheryma whipplei twist: a human pathogenic Actinobacteria with a reduced genome.</title>
        <authorList>
            <person name="Raoult D."/>
            <person name="Ogata H."/>
            <person name="Audic S."/>
            <person name="Robert C."/>
            <person name="Suhre K."/>
            <person name="Drancourt M."/>
            <person name="Claverie J.-M."/>
        </authorList>
    </citation>
    <scope>NUCLEOTIDE SEQUENCE [LARGE SCALE GENOMIC DNA]</scope>
    <source>
        <strain>Twist</strain>
    </source>
</reference>
<protein>
    <recommendedName>
        <fullName evidence="1">Cell division protein CrgA</fullName>
    </recommendedName>
</protein>
<gene>
    <name evidence="1" type="primary">crgA</name>
    <name type="ordered locus">TWT_010</name>
</gene>
<comment type="function">
    <text evidence="1">Involved in cell division.</text>
</comment>
<comment type="subcellular location">
    <subcellularLocation>
        <location evidence="1">Cell membrane</location>
        <topology evidence="1">Multi-pass membrane protein</topology>
    </subcellularLocation>
</comment>
<comment type="similarity">
    <text evidence="1">Belongs to the CrgA family.</text>
</comment>
<accession>P67378</accession>
<accession>P59486</accession>
<sequence length="69" mass="7723">MSRKKHESSENNPVWFPTIMFGLMGTGAVWMVLFYISNGALPLPAVGTWNILIAFGIIMAGFAMMSRWK</sequence>
<organism>
    <name type="scientific">Tropheryma whipplei (strain Twist)</name>
    <name type="common">Whipple's bacillus</name>
    <dbReference type="NCBI Taxonomy" id="203267"/>
    <lineage>
        <taxon>Bacteria</taxon>
        <taxon>Bacillati</taxon>
        <taxon>Actinomycetota</taxon>
        <taxon>Actinomycetes</taxon>
        <taxon>Micrococcales</taxon>
        <taxon>Tropherymataceae</taxon>
        <taxon>Tropheryma</taxon>
    </lineage>
</organism>
<name>CRGA_TROWT</name>